<name>PPIB_DICDI</name>
<organism>
    <name type="scientific">Dictyostelium discoideum</name>
    <name type="common">Social amoeba</name>
    <dbReference type="NCBI Taxonomy" id="44689"/>
    <lineage>
        <taxon>Eukaryota</taxon>
        <taxon>Amoebozoa</taxon>
        <taxon>Evosea</taxon>
        <taxon>Eumycetozoa</taxon>
        <taxon>Dictyostelia</taxon>
        <taxon>Dictyosteliales</taxon>
        <taxon>Dictyosteliaceae</taxon>
        <taxon>Dictyostelium</taxon>
    </lineage>
</organism>
<reference key="1">
    <citation type="journal article" date="1999" name="Biochimie">
        <title>The multigene immunophilin family of Dictyostelium discoideum. Characterization of microsomal and mitochondrial cyclophilin isoforms.</title>
        <authorList>
            <person name="Tapparo A."/>
            <person name="Kieffer S."/>
            <person name="Cretin F."/>
            <person name="Satre M."/>
            <person name="Klein G."/>
        </authorList>
    </citation>
    <scope>NUCLEOTIDE SEQUENCE [GENOMIC DNA]</scope>
    <scope>PROTEIN SEQUENCE OF 23-31</scope>
    <scope>SUBCELLULAR LOCATION</scope>
    <scope>DEVELOPMENTAL STAGE</scope>
    <source>
        <strain>AX2</strain>
    </source>
</reference>
<reference key="2">
    <citation type="journal article" date="2005" name="Nature">
        <title>The genome of the social amoeba Dictyostelium discoideum.</title>
        <authorList>
            <person name="Eichinger L."/>
            <person name="Pachebat J.A."/>
            <person name="Gloeckner G."/>
            <person name="Rajandream M.A."/>
            <person name="Sucgang R."/>
            <person name="Berriman M."/>
            <person name="Song J."/>
            <person name="Olsen R."/>
            <person name="Szafranski K."/>
            <person name="Xu Q."/>
            <person name="Tunggal B."/>
            <person name="Kummerfeld S."/>
            <person name="Madera M."/>
            <person name="Konfortov B.A."/>
            <person name="Rivero F."/>
            <person name="Bankier A.T."/>
            <person name="Lehmann R."/>
            <person name="Hamlin N."/>
            <person name="Davies R."/>
            <person name="Gaudet P."/>
            <person name="Fey P."/>
            <person name="Pilcher K."/>
            <person name="Chen G."/>
            <person name="Saunders D."/>
            <person name="Sodergren E.J."/>
            <person name="Davis P."/>
            <person name="Kerhornou A."/>
            <person name="Nie X."/>
            <person name="Hall N."/>
            <person name="Anjard C."/>
            <person name="Hemphill L."/>
            <person name="Bason N."/>
            <person name="Farbrother P."/>
            <person name="Desany B."/>
            <person name="Just E."/>
            <person name="Morio T."/>
            <person name="Rost R."/>
            <person name="Churcher C.M."/>
            <person name="Cooper J."/>
            <person name="Haydock S."/>
            <person name="van Driessche N."/>
            <person name="Cronin A."/>
            <person name="Goodhead I."/>
            <person name="Muzny D.M."/>
            <person name="Mourier T."/>
            <person name="Pain A."/>
            <person name="Lu M."/>
            <person name="Harper D."/>
            <person name="Lindsay R."/>
            <person name="Hauser H."/>
            <person name="James K.D."/>
            <person name="Quiles M."/>
            <person name="Madan Babu M."/>
            <person name="Saito T."/>
            <person name="Buchrieser C."/>
            <person name="Wardroper A."/>
            <person name="Felder M."/>
            <person name="Thangavelu M."/>
            <person name="Johnson D."/>
            <person name="Knights A."/>
            <person name="Loulseged H."/>
            <person name="Mungall K.L."/>
            <person name="Oliver K."/>
            <person name="Price C."/>
            <person name="Quail M.A."/>
            <person name="Urushihara H."/>
            <person name="Hernandez J."/>
            <person name="Rabbinowitsch E."/>
            <person name="Steffen D."/>
            <person name="Sanders M."/>
            <person name="Ma J."/>
            <person name="Kohara Y."/>
            <person name="Sharp S."/>
            <person name="Simmonds M.N."/>
            <person name="Spiegler S."/>
            <person name="Tivey A."/>
            <person name="Sugano S."/>
            <person name="White B."/>
            <person name="Walker D."/>
            <person name="Woodward J.R."/>
            <person name="Winckler T."/>
            <person name="Tanaka Y."/>
            <person name="Shaulsky G."/>
            <person name="Schleicher M."/>
            <person name="Weinstock G.M."/>
            <person name="Rosenthal A."/>
            <person name="Cox E.C."/>
            <person name="Chisholm R.L."/>
            <person name="Gibbs R.A."/>
            <person name="Loomis W.F."/>
            <person name="Platzer M."/>
            <person name="Kay R.R."/>
            <person name="Williams J.G."/>
            <person name="Dear P.H."/>
            <person name="Noegel A.A."/>
            <person name="Barrell B.G."/>
            <person name="Kuspa A."/>
        </authorList>
    </citation>
    <scope>NUCLEOTIDE SEQUENCE [LARGE SCALE GENOMIC DNA]</scope>
    <source>
        <strain>AX4</strain>
    </source>
</reference>
<comment type="function">
    <text evidence="1">PPIases accelerate the folding of proteins. It catalyzes the cis-trans isomerization of proline imidic peptide bonds in oligopeptides (By similarity).</text>
</comment>
<comment type="catalytic activity">
    <reaction>
        <text>[protein]-peptidylproline (omega=180) = [protein]-peptidylproline (omega=0)</text>
        <dbReference type="Rhea" id="RHEA:16237"/>
        <dbReference type="Rhea" id="RHEA-COMP:10747"/>
        <dbReference type="Rhea" id="RHEA-COMP:10748"/>
        <dbReference type="ChEBI" id="CHEBI:83833"/>
        <dbReference type="ChEBI" id="CHEBI:83834"/>
        <dbReference type="EC" id="5.2.1.8"/>
    </reaction>
</comment>
<comment type="activity regulation">
    <text evidence="4">Binds cyclosporin A (CsA). CsA mediates some of its effects via an inhibitory action on PPIase (Probable).</text>
</comment>
<comment type="subcellular location">
    <subcellularLocation>
        <location evidence="3">Microsome</location>
    </subcellularLocation>
</comment>
<comment type="developmental stage">
    <text evidence="3">Strongly expressed in vegetative cells with expression levels steadily decreasing during differentiation. After 12 hours of differentiation mRNA expression levels are very. slightly expressed.</text>
</comment>
<comment type="similarity">
    <text evidence="4">Belongs to the cyclophilin-type PPIase family.</text>
</comment>
<proteinExistence type="evidence at protein level"/>
<dbReference type="EC" id="5.2.1.8"/>
<dbReference type="EMBL" id="AF053068">
    <property type="protein sequence ID" value="AAD48893.1"/>
    <property type="molecule type" value="Genomic_DNA"/>
</dbReference>
<dbReference type="EMBL" id="AF123597">
    <property type="protein sequence ID" value="AAD48910.1"/>
    <property type="molecule type" value="mRNA"/>
</dbReference>
<dbReference type="EMBL" id="AAFI02000005">
    <property type="protein sequence ID" value="EAL71910.1"/>
    <property type="molecule type" value="Genomic_DNA"/>
</dbReference>
<dbReference type="RefSeq" id="XP_646208.1">
    <property type="nucleotide sequence ID" value="XM_641116.1"/>
</dbReference>
<dbReference type="SMR" id="Q9TW32"/>
<dbReference type="FunCoup" id="Q9TW32">
    <property type="interactions" value="387"/>
</dbReference>
<dbReference type="STRING" id="44689.Q9TW32"/>
<dbReference type="GlyGen" id="Q9TW32">
    <property type="glycosylation" value="1 site"/>
</dbReference>
<dbReference type="PaxDb" id="44689-DDB0191497"/>
<dbReference type="EnsemblProtists" id="EAL71910">
    <property type="protein sequence ID" value="EAL71910"/>
    <property type="gene ID" value="DDB_G0269120"/>
</dbReference>
<dbReference type="GeneID" id="8617162"/>
<dbReference type="KEGG" id="ddi:DDB_G0269120"/>
<dbReference type="dictyBase" id="DDB_G0269120">
    <property type="gene designation" value="cypB"/>
</dbReference>
<dbReference type="VEuPathDB" id="AmoebaDB:DDB_G0269120"/>
<dbReference type="eggNOG" id="KOG0865">
    <property type="taxonomic scope" value="Eukaryota"/>
</dbReference>
<dbReference type="HOGENOM" id="CLU_012062_4_2_1"/>
<dbReference type="InParanoid" id="Q9TW32"/>
<dbReference type="OMA" id="ENHEITH"/>
<dbReference type="PhylomeDB" id="Q9TW32"/>
<dbReference type="PRO" id="PR:Q9TW32"/>
<dbReference type="Proteomes" id="UP000002195">
    <property type="component" value="Chromosome 1"/>
</dbReference>
<dbReference type="GO" id="GO:0005737">
    <property type="term" value="C:cytoplasm"/>
    <property type="evidence" value="ECO:0000318"/>
    <property type="project" value="GO_Central"/>
</dbReference>
<dbReference type="GO" id="GO:0005783">
    <property type="term" value="C:endoplasmic reticulum"/>
    <property type="evidence" value="ECO:0007669"/>
    <property type="project" value="UniProtKB-KW"/>
</dbReference>
<dbReference type="GO" id="GO:0043231">
    <property type="term" value="C:intracellular membrane-bounded organelle"/>
    <property type="evidence" value="ECO:0000314"/>
    <property type="project" value="dictyBase"/>
</dbReference>
<dbReference type="GO" id="GO:0016018">
    <property type="term" value="F:cyclosporin A binding"/>
    <property type="evidence" value="ECO:0000318"/>
    <property type="project" value="GO_Central"/>
</dbReference>
<dbReference type="GO" id="GO:0003755">
    <property type="term" value="F:peptidyl-prolyl cis-trans isomerase activity"/>
    <property type="evidence" value="ECO:0000318"/>
    <property type="project" value="GO_Central"/>
</dbReference>
<dbReference type="GO" id="GO:0006457">
    <property type="term" value="P:protein folding"/>
    <property type="evidence" value="ECO:0000318"/>
    <property type="project" value="GO_Central"/>
</dbReference>
<dbReference type="CDD" id="cd01926">
    <property type="entry name" value="cyclophilin_ABH_like"/>
    <property type="match status" value="1"/>
</dbReference>
<dbReference type="FunFam" id="2.40.100.10:FF:000002">
    <property type="entry name" value="Peptidyl-prolyl cis-trans isomerase"/>
    <property type="match status" value="1"/>
</dbReference>
<dbReference type="Gene3D" id="2.40.100.10">
    <property type="entry name" value="Cyclophilin-like"/>
    <property type="match status" value="1"/>
</dbReference>
<dbReference type="InterPro" id="IPR029000">
    <property type="entry name" value="Cyclophilin-like_dom_sf"/>
</dbReference>
<dbReference type="InterPro" id="IPR024936">
    <property type="entry name" value="Cyclophilin-type_PPIase"/>
</dbReference>
<dbReference type="InterPro" id="IPR020892">
    <property type="entry name" value="Cyclophilin-type_PPIase_CS"/>
</dbReference>
<dbReference type="InterPro" id="IPR002130">
    <property type="entry name" value="Cyclophilin-type_PPIase_dom"/>
</dbReference>
<dbReference type="PANTHER" id="PTHR11071">
    <property type="entry name" value="PEPTIDYL-PROLYL CIS-TRANS ISOMERASE"/>
    <property type="match status" value="1"/>
</dbReference>
<dbReference type="PANTHER" id="PTHR11071:SF561">
    <property type="entry name" value="PEPTIDYL-PROLYL CIS-TRANS ISOMERASE D-RELATED"/>
    <property type="match status" value="1"/>
</dbReference>
<dbReference type="Pfam" id="PF00160">
    <property type="entry name" value="Pro_isomerase"/>
    <property type="match status" value="1"/>
</dbReference>
<dbReference type="PIRSF" id="PIRSF001467">
    <property type="entry name" value="Peptidylpro_ismrse"/>
    <property type="match status" value="1"/>
</dbReference>
<dbReference type="PRINTS" id="PR00153">
    <property type="entry name" value="CSAPPISMRASE"/>
</dbReference>
<dbReference type="SUPFAM" id="SSF50891">
    <property type="entry name" value="Cyclophilin-like"/>
    <property type="match status" value="1"/>
</dbReference>
<dbReference type="PROSITE" id="PS00170">
    <property type="entry name" value="CSA_PPIASE_1"/>
    <property type="match status" value="1"/>
</dbReference>
<dbReference type="PROSITE" id="PS50072">
    <property type="entry name" value="CSA_PPIASE_2"/>
    <property type="match status" value="1"/>
</dbReference>
<accession>Q9TW32</accession>
<accession>Q55DC3</accession>
<keyword id="KW-0903">Direct protein sequencing</keyword>
<keyword id="KW-0256">Endoplasmic reticulum</keyword>
<keyword id="KW-0413">Isomerase</keyword>
<keyword id="KW-0492">Microsome</keyword>
<keyword id="KW-1185">Reference proteome</keyword>
<keyword id="KW-0697">Rotamase</keyword>
<keyword id="KW-0732">Signal</keyword>
<sequence length="197" mass="21399">MKVIFVVLAIVLVTLWAMPSEAGKDPKITNKVFFDIEIDNKPAGRIVFGLYGKTVPKTVENFRALCTGEKGLGTSGKPLHYKDSKFHRIIPNFMIQGGDFTRGDGTGGESIYGKKFNDENFKIKHSKPGLLSMANAGPNTNGSQFFITTVVTSWLDGRHTVFGEVIEGMDIVKLLESIGSQSGTPSKIAKISNSGEL</sequence>
<protein>
    <recommendedName>
        <fullName>Peptidyl-prolyl cis-trans isomerase B</fullName>
        <shortName>PPIase B</shortName>
        <ecNumber>5.2.1.8</ecNumber>
    </recommendedName>
    <alternativeName>
        <fullName>Cyclophilin B</fullName>
    </alternativeName>
    <alternativeName>
        <fullName>Rotamase B</fullName>
    </alternativeName>
</protein>
<feature type="signal peptide" evidence="3">
    <location>
        <begin position="1"/>
        <end position="22"/>
    </location>
</feature>
<feature type="chain" id="PRO_0000386633" description="Peptidyl-prolyl cis-trans isomerase B">
    <location>
        <begin position="23"/>
        <end position="197"/>
    </location>
</feature>
<feature type="domain" description="PPIase cyclophilin-type" evidence="2">
    <location>
        <begin position="33"/>
        <end position="196"/>
    </location>
</feature>
<evidence type="ECO:0000250" key="1"/>
<evidence type="ECO:0000255" key="2">
    <source>
        <dbReference type="PROSITE-ProRule" id="PRU00156"/>
    </source>
</evidence>
<evidence type="ECO:0000269" key="3">
    <source>
    </source>
</evidence>
<evidence type="ECO:0000305" key="4"/>
<gene>
    <name type="primary">cypB</name>
    <name type="synonym">cyp2</name>
    <name type="ORF">DDB_G0269120</name>
</gene>